<dbReference type="EMBL" id="AY043466">
    <property type="protein sequence ID" value="AAK91779.1"/>
    <property type="molecule type" value="mRNA"/>
</dbReference>
<dbReference type="EMBL" id="AF416901">
    <property type="protein sequence ID" value="AAL13290.1"/>
    <property type="molecule type" value="mRNA"/>
</dbReference>
<dbReference type="EMBL" id="AF416902">
    <property type="protein sequence ID" value="AAL13291.1"/>
    <property type="molecule type" value="mRNA"/>
</dbReference>
<dbReference type="EMBL" id="AF416903">
    <property type="protein sequence ID" value="AAL13292.1"/>
    <property type="molecule type" value="mRNA"/>
</dbReference>
<dbReference type="EMBL" id="AF416904">
    <property type="protein sequence ID" value="AAL13293.1"/>
    <property type="molecule type" value="mRNA"/>
</dbReference>
<dbReference type="EMBL" id="AF416905">
    <property type="protein sequence ID" value="AAL13294.1"/>
    <property type="molecule type" value="mRNA"/>
</dbReference>
<dbReference type="EMBL" id="EF064732">
    <property type="protein sequence ID" value="ABK41915.1"/>
    <property type="molecule type" value="Genomic_DNA"/>
</dbReference>
<dbReference type="EMBL" id="AK098122">
    <property type="status" value="NOT_ANNOTATED_CDS"/>
    <property type="molecule type" value="mRNA"/>
</dbReference>
<dbReference type="EMBL" id="AL356276">
    <property type="status" value="NOT_ANNOTATED_CDS"/>
    <property type="molecule type" value="Genomic_DNA"/>
</dbReference>
<dbReference type="EMBL" id="CH471121">
    <property type="protein sequence ID" value="EAW52872.1"/>
    <property type="molecule type" value="Genomic_DNA"/>
</dbReference>
<dbReference type="EMBL" id="CH471121">
    <property type="protein sequence ID" value="EAW52876.1"/>
    <property type="molecule type" value="Genomic_DNA"/>
</dbReference>
<dbReference type="EMBL" id="CH471121">
    <property type="protein sequence ID" value="EAW52877.1"/>
    <property type="molecule type" value="Genomic_DNA"/>
</dbReference>
<dbReference type="EMBL" id="BC028933">
    <property type="protein sequence ID" value="AAH28933.1"/>
    <property type="molecule type" value="mRNA"/>
</dbReference>
<dbReference type="CCDS" id="CCDS1167.1">
    <molecule id="Q96P31-1"/>
</dbReference>
<dbReference type="CCDS" id="CCDS81385.1">
    <molecule id="Q96P31-6"/>
</dbReference>
<dbReference type="RefSeq" id="NP_001307262.1">
    <molecule id="Q96P31-6"/>
    <property type="nucleotide sequence ID" value="NM_001320333.2"/>
</dbReference>
<dbReference type="RefSeq" id="NP_443171.2">
    <molecule id="Q96P31-1"/>
    <property type="nucleotide sequence ID" value="NM_052939.3"/>
</dbReference>
<dbReference type="RefSeq" id="XP_006711208.1">
    <molecule id="Q96P31-1"/>
    <property type="nucleotide sequence ID" value="XM_006711145.2"/>
</dbReference>
<dbReference type="BioGRID" id="125428">
    <property type="interactions" value="43"/>
</dbReference>
<dbReference type="FunCoup" id="Q96P31">
    <property type="interactions" value="18"/>
</dbReference>
<dbReference type="IntAct" id="Q96P31">
    <property type="interactions" value="9"/>
</dbReference>
<dbReference type="STRING" id="9606.ENSP00000357169"/>
<dbReference type="GlyCosmos" id="Q96P31">
    <property type="glycosylation" value="1 site, No reported glycans"/>
</dbReference>
<dbReference type="GlyGen" id="Q96P31">
    <property type="glycosylation" value="1 site"/>
</dbReference>
<dbReference type="iPTMnet" id="Q96P31"/>
<dbReference type="PhosphoSitePlus" id="Q96P31"/>
<dbReference type="BioMuta" id="FCRL3"/>
<dbReference type="DMDM" id="74761021"/>
<dbReference type="MassIVE" id="Q96P31"/>
<dbReference type="PaxDb" id="9606-ENSP00000357167"/>
<dbReference type="PeptideAtlas" id="Q96P31"/>
<dbReference type="ProteomicsDB" id="77608">
    <molecule id="Q96P31-1"/>
</dbReference>
<dbReference type="ProteomicsDB" id="77609">
    <molecule id="Q96P31-2"/>
</dbReference>
<dbReference type="ProteomicsDB" id="77610">
    <molecule id="Q96P31-3"/>
</dbReference>
<dbReference type="ProteomicsDB" id="77613">
    <molecule id="Q96P31-6"/>
</dbReference>
<dbReference type="ProteomicsDB" id="77614">
    <molecule id="Q96P31-7"/>
</dbReference>
<dbReference type="Antibodypedia" id="2552">
    <property type="antibodies" value="169 antibodies from 24 providers"/>
</dbReference>
<dbReference type="DNASU" id="115352"/>
<dbReference type="Ensembl" id="ENST00000368184.8">
    <molecule id="Q96P31-1"/>
    <property type="protein sequence ID" value="ENSP00000357167.3"/>
    <property type="gene ID" value="ENSG00000160856.21"/>
</dbReference>
<dbReference type="Ensembl" id="ENST00000368186.9">
    <molecule id="Q96P31-6"/>
    <property type="protein sequence ID" value="ENSP00000357169.5"/>
    <property type="gene ID" value="ENSG00000160856.21"/>
</dbReference>
<dbReference type="Ensembl" id="ENST00000477837.5">
    <molecule id="Q96P31-2"/>
    <property type="protein sequence ID" value="ENSP00000433430.1"/>
    <property type="gene ID" value="ENSG00000160856.21"/>
</dbReference>
<dbReference type="Ensembl" id="ENST00000485028.5">
    <molecule id="Q96P31-1"/>
    <property type="protein sequence ID" value="ENSP00000434331.1"/>
    <property type="gene ID" value="ENSG00000160856.21"/>
</dbReference>
<dbReference type="Ensembl" id="ENST00000492769.5">
    <molecule id="Q96P31-3"/>
    <property type="protein sequence ID" value="ENSP00000435487.1"/>
    <property type="gene ID" value="ENSG00000160856.21"/>
</dbReference>
<dbReference type="GeneID" id="115352"/>
<dbReference type="KEGG" id="hsa:115352"/>
<dbReference type="MANE-Select" id="ENST00000368184.8">
    <property type="protein sequence ID" value="ENSP00000357167.3"/>
    <property type="RefSeq nucleotide sequence ID" value="NM_052939.4"/>
    <property type="RefSeq protein sequence ID" value="NP_443171.2"/>
</dbReference>
<dbReference type="UCSC" id="uc001fqz.5">
    <molecule id="Q96P31-1"/>
    <property type="organism name" value="human"/>
</dbReference>
<dbReference type="AGR" id="HGNC:18506"/>
<dbReference type="CTD" id="115352"/>
<dbReference type="DisGeNET" id="115352"/>
<dbReference type="GeneCards" id="FCRL3"/>
<dbReference type="HGNC" id="HGNC:18506">
    <property type="gene designation" value="FCRL3"/>
</dbReference>
<dbReference type="HPA" id="ENSG00000160856">
    <property type="expression patterns" value="Tissue enriched (lymphoid)"/>
</dbReference>
<dbReference type="MIM" id="180300">
    <property type="type" value="phenotype"/>
</dbReference>
<dbReference type="MIM" id="606510">
    <property type="type" value="gene"/>
</dbReference>
<dbReference type="neXtProt" id="NX_Q96P31"/>
<dbReference type="OpenTargets" id="ENSG00000160856"/>
<dbReference type="PharmGKB" id="PA142671767"/>
<dbReference type="VEuPathDB" id="HostDB:ENSG00000160856"/>
<dbReference type="eggNOG" id="ENOG502S65W">
    <property type="taxonomic scope" value="Eukaryota"/>
</dbReference>
<dbReference type="GeneTree" id="ENSGT01050000244808"/>
<dbReference type="HOGENOM" id="CLU_023383_6_1_1"/>
<dbReference type="InParanoid" id="Q96P31"/>
<dbReference type="OMA" id="HEKVYYK"/>
<dbReference type="OrthoDB" id="9448246at2759"/>
<dbReference type="PAN-GO" id="Q96P31">
    <property type="GO annotations" value="3 GO annotations based on evolutionary models"/>
</dbReference>
<dbReference type="PhylomeDB" id="Q96P31"/>
<dbReference type="TreeFam" id="TF351107"/>
<dbReference type="PathwayCommons" id="Q96P31"/>
<dbReference type="SignaLink" id="Q96P31"/>
<dbReference type="SIGNOR" id="Q96P31"/>
<dbReference type="BioGRID-ORCS" id="115352">
    <property type="hits" value="7 hits in 1138 CRISPR screens"/>
</dbReference>
<dbReference type="GeneWiki" id="FCRL3"/>
<dbReference type="GenomeRNAi" id="115352"/>
<dbReference type="Pharos" id="Q96P31">
    <property type="development level" value="Tbio"/>
</dbReference>
<dbReference type="PRO" id="PR:Q96P31"/>
<dbReference type="Proteomes" id="UP000005640">
    <property type="component" value="Chromosome 1"/>
</dbReference>
<dbReference type="RNAct" id="Q96P31">
    <property type="molecule type" value="protein"/>
</dbReference>
<dbReference type="Bgee" id="ENSG00000160856">
    <property type="expression patterns" value="Expressed in ileal mucosa and 122 other cell types or tissues"/>
</dbReference>
<dbReference type="ExpressionAtlas" id="Q96P31">
    <property type="expression patterns" value="baseline and differential"/>
</dbReference>
<dbReference type="GO" id="GO:0009986">
    <property type="term" value="C:cell surface"/>
    <property type="evidence" value="ECO:0000314"/>
    <property type="project" value="UniProtKB"/>
</dbReference>
<dbReference type="GO" id="GO:0009897">
    <property type="term" value="C:external side of plasma membrane"/>
    <property type="evidence" value="ECO:0000318"/>
    <property type="project" value="GO_Central"/>
</dbReference>
<dbReference type="GO" id="GO:0031528">
    <property type="term" value="C:microvillus membrane"/>
    <property type="evidence" value="ECO:0007669"/>
    <property type="project" value="UniProtKB-SubCell"/>
</dbReference>
<dbReference type="GO" id="GO:0019900">
    <property type="term" value="F:kinase binding"/>
    <property type="evidence" value="ECO:0000353"/>
    <property type="project" value="UniProtKB"/>
</dbReference>
<dbReference type="GO" id="GO:0019902">
    <property type="term" value="F:phosphatase binding"/>
    <property type="evidence" value="ECO:0000353"/>
    <property type="project" value="UniProtKB"/>
</dbReference>
<dbReference type="GO" id="GO:0004888">
    <property type="term" value="F:transmembrane signaling receptor activity"/>
    <property type="evidence" value="ECO:0000318"/>
    <property type="project" value="GO_Central"/>
</dbReference>
<dbReference type="GO" id="GO:0007166">
    <property type="term" value="P:cell surface receptor signaling pathway"/>
    <property type="evidence" value="ECO:0000318"/>
    <property type="project" value="GO_Central"/>
</dbReference>
<dbReference type="GO" id="GO:0006955">
    <property type="term" value="P:immune response"/>
    <property type="evidence" value="ECO:0000318"/>
    <property type="project" value="GO_Central"/>
</dbReference>
<dbReference type="GO" id="GO:0050859">
    <property type="term" value="P:negative regulation of B cell receptor signaling pathway"/>
    <property type="evidence" value="ECO:0000314"/>
    <property type="project" value="UniProtKB"/>
</dbReference>
<dbReference type="GO" id="GO:0002638">
    <property type="term" value="P:negative regulation of immunoglobulin production"/>
    <property type="evidence" value="ECO:0000314"/>
    <property type="project" value="UniProtKB"/>
</dbReference>
<dbReference type="GO" id="GO:0030890">
    <property type="term" value="P:positive regulation of B cell proliferation"/>
    <property type="evidence" value="ECO:0000314"/>
    <property type="project" value="UniProtKB"/>
</dbReference>
<dbReference type="GO" id="GO:0043410">
    <property type="term" value="P:positive regulation of MAPK cascade"/>
    <property type="evidence" value="ECO:0000314"/>
    <property type="project" value="UniProtKB"/>
</dbReference>
<dbReference type="GO" id="GO:0050864">
    <property type="term" value="P:regulation of B cell activation"/>
    <property type="evidence" value="ECO:0000314"/>
    <property type="project" value="UniProtKB"/>
</dbReference>
<dbReference type="GO" id="GO:0045577">
    <property type="term" value="P:regulation of B cell differentiation"/>
    <property type="evidence" value="ECO:0000314"/>
    <property type="project" value="UniProtKB"/>
</dbReference>
<dbReference type="GO" id="GO:0090279">
    <property type="term" value="P:regulation of calcium ion import"/>
    <property type="evidence" value="ECO:0000314"/>
    <property type="project" value="UniProtKB"/>
</dbReference>
<dbReference type="GO" id="GO:0034163">
    <property type="term" value="P:regulation of toll-like receptor 9 signaling pathway"/>
    <property type="evidence" value="ECO:0000314"/>
    <property type="project" value="UniProtKB"/>
</dbReference>
<dbReference type="GO" id="GO:0007338">
    <property type="term" value="P:single fertilization"/>
    <property type="evidence" value="ECO:0007669"/>
    <property type="project" value="UniProtKB-KW"/>
</dbReference>
<dbReference type="CDD" id="cd00096">
    <property type="entry name" value="Ig"/>
    <property type="match status" value="2"/>
</dbReference>
<dbReference type="FunFam" id="2.60.40.10:FF:000357">
    <property type="entry name" value="Fc receptor like 1"/>
    <property type="match status" value="2"/>
</dbReference>
<dbReference type="FunFam" id="2.60.40.10:FF:000592">
    <property type="entry name" value="Fc receptor like 1"/>
    <property type="match status" value="1"/>
</dbReference>
<dbReference type="FunFam" id="2.60.40.10:FF:001308">
    <property type="entry name" value="Fc receptor like 4"/>
    <property type="match status" value="1"/>
</dbReference>
<dbReference type="Gene3D" id="2.60.40.10">
    <property type="entry name" value="Immunoglobulins"/>
    <property type="match status" value="6"/>
</dbReference>
<dbReference type="InterPro" id="IPR007110">
    <property type="entry name" value="Ig-like_dom"/>
</dbReference>
<dbReference type="InterPro" id="IPR036179">
    <property type="entry name" value="Ig-like_dom_sf"/>
</dbReference>
<dbReference type="InterPro" id="IPR013783">
    <property type="entry name" value="Ig-like_fold"/>
</dbReference>
<dbReference type="InterPro" id="IPR050488">
    <property type="entry name" value="Ig_Fc_receptor"/>
</dbReference>
<dbReference type="InterPro" id="IPR003599">
    <property type="entry name" value="Ig_sub"/>
</dbReference>
<dbReference type="InterPro" id="IPR003598">
    <property type="entry name" value="Ig_sub2"/>
</dbReference>
<dbReference type="InterPro" id="IPR013151">
    <property type="entry name" value="Immunoglobulin_dom"/>
</dbReference>
<dbReference type="PANTHER" id="PTHR11481:SF117">
    <property type="entry name" value="FC RECEPTOR-LIKE PROTEIN 1"/>
    <property type="match status" value="1"/>
</dbReference>
<dbReference type="PANTHER" id="PTHR11481">
    <property type="entry name" value="IMMUNOGLOBULIN FC RECEPTOR"/>
    <property type="match status" value="1"/>
</dbReference>
<dbReference type="Pfam" id="PF00047">
    <property type="entry name" value="ig"/>
    <property type="match status" value="2"/>
</dbReference>
<dbReference type="Pfam" id="PF13895">
    <property type="entry name" value="Ig_2"/>
    <property type="match status" value="2"/>
</dbReference>
<dbReference type="Pfam" id="PF13927">
    <property type="entry name" value="Ig_3"/>
    <property type="match status" value="1"/>
</dbReference>
<dbReference type="SMART" id="SM00409">
    <property type="entry name" value="IG"/>
    <property type="match status" value="6"/>
</dbReference>
<dbReference type="SMART" id="SM00408">
    <property type="entry name" value="IGc2"/>
    <property type="match status" value="5"/>
</dbReference>
<dbReference type="SUPFAM" id="SSF48726">
    <property type="entry name" value="Immunoglobulin"/>
    <property type="match status" value="6"/>
</dbReference>
<dbReference type="PROSITE" id="PS50835">
    <property type="entry name" value="IG_LIKE"/>
    <property type="match status" value="6"/>
</dbReference>
<accession>Q96P31</accession>
<accession>A0N0M4</accession>
<accession>A8MTH7</accession>
<accession>D3DVD2</accession>
<accession>Q5VXZ8</accession>
<accession>Q8N6S2</accession>
<accession>Q96LA4</accession>
<accession>Q96P27</accession>
<accession>Q96P28</accession>
<accession>Q96P29</accession>
<accession>Q96P30</accession>
<organism>
    <name type="scientific">Homo sapiens</name>
    <name type="common">Human</name>
    <dbReference type="NCBI Taxonomy" id="9606"/>
    <lineage>
        <taxon>Eukaryota</taxon>
        <taxon>Metazoa</taxon>
        <taxon>Chordata</taxon>
        <taxon>Craniata</taxon>
        <taxon>Vertebrata</taxon>
        <taxon>Euteleostomi</taxon>
        <taxon>Mammalia</taxon>
        <taxon>Eutheria</taxon>
        <taxon>Euarchontoglires</taxon>
        <taxon>Primates</taxon>
        <taxon>Haplorrhini</taxon>
        <taxon>Catarrhini</taxon>
        <taxon>Hominidae</taxon>
        <taxon>Homo</taxon>
    </lineage>
</organism>
<proteinExistence type="evidence at protein level"/>
<protein>
    <recommendedName>
        <fullName evidence="33">Fc receptor-like protein 3</fullName>
        <shortName evidence="33">FcR-like protein 3</shortName>
        <shortName evidence="33">FcRL3</shortName>
    </recommendedName>
    <alternativeName>
        <fullName evidence="33">Fc receptor homolog 3</fullName>
        <shortName evidence="33">FcRH3</shortName>
    </alternativeName>
    <alternativeName>
        <fullName>IFGP family protein 3</fullName>
        <shortName>hIFGP3</shortName>
    </alternativeName>
    <alternativeName>
        <fullName>Immune receptor translocation-associated protein 3</fullName>
    </alternativeName>
    <alternativeName>
        <fullName evidence="32">MAIA</fullName>
    </alternativeName>
    <alternativeName>
        <fullName>SH2 domain-containing phosphatase anchor protein 2</fullName>
    </alternativeName>
    <cdAntigenName>CD307c</cdAntigenName>
</protein>
<gene>
    <name evidence="35" type="primary">FCRL3</name>
    <name evidence="35" type="synonym">FCRH3</name>
    <name evidence="35" type="synonym">IFGP3</name>
    <name evidence="35" type="synonym">IRTA3</name>
    <name evidence="35" type="synonym">SPAP2</name>
</gene>
<comment type="function">
    <text evidence="18 19 20 22 26">Promotes TLR9-induced B-cell proliferation, activation and survival but inhibits antibody production and suppresses plasma cell differentiation. Enhances activation of NF-kappa-B and MAPK signaling pathways in TLR9 stimulated B-cells (PubMed:23857366). Has inhibitory potentional on B-cell receptor (BCR)-mediated signaling, possibly through association with SH2 domain-containing phosphatases. Inhibits cell tyrosine phosphorylation, calcium mobilization and activation-induced cell death induced through BCR signaling (PubMed:19843936). Regulatory T-cells expressing FCRL3 exhibit a memory phenotype, are relatively nonresponsive to antigenic stimulation in presence of IL2 and have reduced capacity to suppress the proliferation of effector T-cells (PubMed:19494275, PubMed:20190142). Acts as a human-specific epitope on the cell surface of oocytes (oolemma) and plays a role during sperm-egg adhesion and fusion (PubMed:36070373). Interacts with the IZUMO1-IZUMO1R/JUNO sperm-egg complex and replaces IZUMO1R/JUNO as IZUMO1 receptor during fertilization, thereby permitting species-specific gamete fusion (PubMed:36070373).</text>
</comment>
<comment type="subunit">
    <text evidence="6 19 26">Interacts (via phosphorylated ITIM motifs) with phosphatases INPP5D, PTPN6 and PTPN11. Interacts (via ITIM motifs) SYK and ZAP70. Interacts with IZUMO1R/JUNO (PubMed:36070373). Interacts (via extracellular domain) with IZUMO1; the interaction replaces IZUMO1R/JUNO as IZUMO1 receptor after adhesion between sperm and egg (PubMed:36070373).</text>
</comment>
<comment type="interaction">
    <interactant intactId="EBI-17443171">
        <id>Q96P31-6</id>
    </interactant>
    <interactant intactId="EBI-1754287">
        <id>Q9NRZ5</id>
        <label>AGPAT4</label>
    </interactant>
    <organismsDiffer>false</organismsDiffer>
    <experiments>3</experiments>
</comment>
<comment type="interaction">
    <interactant intactId="EBI-17443171">
        <id>Q96P31-6</id>
    </interactant>
    <interactant intactId="EBI-11522780">
        <id>Q96DZ9-2</id>
        <label>CMTM5</label>
    </interactant>
    <organismsDiffer>false</organismsDiffer>
    <experiments>3</experiments>
</comment>
<comment type="interaction">
    <interactant intactId="EBI-17443171">
        <id>Q96P31-6</id>
    </interactant>
    <interactant intactId="EBI-720480">
        <id>P24593</id>
        <label>IGFBP5</label>
    </interactant>
    <organismsDiffer>false</organismsDiffer>
    <experiments>3</experiments>
</comment>
<comment type="interaction">
    <interactant intactId="EBI-17443171">
        <id>Q96P31-6</id>
    </interactant>
    <interactant intactId="EBI-2808234">
        <id>P11836</id>
        <label>MS4A1</label>
    </interactant>
    <organismsDiffer>false</organismsDiffer>
    <experiments>3</experiments>
</comment>
<comment type="interaction">
    <interactant intactId="EBI-17443171">
        <id>Q96P31-6</id>
    </interactant>
    <interactant intactId="EBI-2825135">
        <id>P22732</id>
        <label>SLC2A5</label>
    </interactant>
    <organismsDiffer>false</organismsDiffer>
    <experiments>3</experiments>
</comment>
<comment type="interaction">
    <interactant intactId="EBI-17443171">
        <id>Q96P31-6</id>
    </interactant>
    <interactant intactId="EBI-10294651">
        <id>Q99726</id>
        <label>SLC30A3</label>
    </interactant>
    <organismsDiffer>false</organismsDiffer>
    <experiments>3</experiments>
</comment>
<comment type="interaction">
    <interactant intactId="EBI-17443171">
        <id>Q96P31-6</id>
    </interactant>
    <interactant intactId="EBI-738687">
        <id>P02808</id>
        <label>STATH</label>
    </interactant>
    <organismsDiffer>false</organismsDiffer>
    <experiments>3</experiments>
</comment>
<comment type="subcellular location">
    <subcellularLocation>
        <location evidence="11 20 26">Cell membrane</location>
        <topology evidence="11">Single-pass type I membrane protein</topology>
    </subcellularLocation>
    <subcellularLocation>
        <location evidence="26">Cell projection</location>
        <location evidence="26">Microvillus membrane</location>
    </subcellularLocation>
    <text evidence="26">Localized along the oolemma microvilli of unfertilized oocytes.</text>
</comment>
<comment type="alternative products">
    <event type="alternative splicing"/>
    <isoform>
        <id>Q96P31-1</id>
        <name>1</name>
        <name>Spap2a</name>
        <sequence type="displayed"/>
    </isoform>
    <isoform>
        <id>Q96P31-2</id>
        <name>2</name>
        <name>Spap2b</name>
        <sequence type="described" ref="VSP_033300"/>
    </isoform>
    <isoform>
        <id>Q96P31-3</id>
        <name>3</name>
        <name>Spap2c</name>
        <sequence type="described" ref="VSP_033305"/>
    </isoform>
    <isoform>
        <id>Q96P31-4</id>
        <name>4</name>
        <name>Spap2d</name>
        <sequence type="described" ref="VSP_033301 VSP_033303"/>
    </isoform>
    <isoform>
        <id>Q96P31-5</id>
        <name>5</name>
        <sequence type="described" ref="VSP_033302 VSP_033304"/>
    </isoform>
    <isoform>
        <id>Q96P31-6</id>
        <name>6</name>
        <sequence type="described" ref="VSP_033308"/>
    </isoform>
    <isoform>
        <id>Q96P31-7</id>
        <name>7</name>
        <sequence type="described" ref="VSP_033306 VSP_033307"/>
    </isoform>
</comment>
<comment type="tissue specificity">
    <text evidence="4 5 6 7 11 20 22 26">Primarily expressed in secondary lymphoid tissues by mature subsets of B-cells. Low expression on transitional B cells which increases to higher surface expression on mature and memory B-cells with innate-like features (at protein level) (PubMed:23857366). Expressed a low levels in naive and germinal center B-cells but also expressed in NK cells (at protein level) (PubMed:20190142). Expressed in unfertilized oocytes (at protein level) (PubMed:36070373). Expressed in a population of thymically derived naturally occurring regulatory T-cells that exhibits a memory phenotype, specialized in suppressing immune response to self-antigens (PubMed:20190142). Detected in spleen, lymph node, peripheral blood lymphocytes, thymus, bone marrow, kidney, salivary gland, adrenal gland and uterus.</text>
</comment>
<comment type="developmental stage">
    <text evidence="22 26">Expressed in mature metaphase II (MII) stage oocytes (at protein level) (PubMed:36070373). In B-cells, expression increases as a function of differentiation and peaks on memory B-cells.</text>
</comment>
<comment type="PTM">
    <text evidence="6">Phosphorylated on cytoplasmic tyrosines; required for interaction with protein tyrosine phosphatases and protein tyrosine kinases.</text>
</comment>
<comment type="disease" evidence="7 8 10 12 14 15 16 21 25">
    <disease id="DI-02692">
        <name>Rheumatoid arthritis</name>
        <acronym>RA</acronym>
        <description>An inflammatory disease with autoimmune features and a complex genetic component. It primarily affects the joints and is characterized by inflammatory changes in the synovial membranes and articular structures, widespread fibrinoid degeneration of the collagen fibers in mesenchymal tissues, and by atrophy and rarefaction of bony structures.</description>
        <dbReference type="MIM" id="180300"/>
    </disease>
    <text>Disease susceptibility is associated with variants affecting the gene represented in this entry.</text>
</comment>
<comment type="disease">
    <text evidence="7 9 17 23 24">Genetic variation in FCRL3 may influence susceptibility to autoimmune disorders, including Graves disease or multiple sclerosis. Graves disease is an autoimmune disorder associated with overactivity of the thyroid gland and hyperthyroidism. Multiple sclerosis is an autoimmune/inflammatory neurodegenerative disease which mainly affects young adults and is characterized by destruction of myelin in the central nervous system.</text>
</comment>
<reference key="1">
    <citation type="journal article" date="2001" name="Proc. Natl. Acad. Sci. U.S.A.">
        <title>Identification of a family of Fc receptor homologs with preferential B cell expression.</title>
        <authorList>
            <person name="Davis R.S."/>
            <person name="Wang Y.-H."/>
            <person name="Kubagawa H."/>
            <person name="Cooper M.D."/>
        </authorList>
    </citation>
    <scope>NUCLEOTIDE SEQUENCE [MRNA] (ISOFORM 1)</scope>
    <scope>TISSUE SPECIFICITY</scope>
    <source>
        <tissue>Lymph node</tissue>
    </source>
</reference>
<reference key="2">
    <citation type="journal article" date="2002" name="Biochem. Biophys. Res. Commun.">
        <title>SPAP2, an Ig family receptor containing both ITIMs and ITAMs.</title>
        <authorList>
            <person name="Xu M.-J."/>
            <person name="Zhao R."/>
            <person name="Cao H."/>
            <person name="Zhao Z.J."/>
        </authorList>
    </citation>
    <scope>NUCLEOTIDE SEQUENCE [MRNA] (ISOFORMS 1; 2; 3; 4 AND 5)</scope>
    <scope>PHOSPHORYLATION</scope>
    <scope>INTERACTION WITH PTPN6; PTPN11; SYK AND ZAP70</scope>
    <scope>MUTAGENESIS OF TYR-650; TYR-662; TYR-692 AND TYR-722</scope>
    <scope>TISSUE SPECIFICITY</scope>
    <source>
        <tissue>Bone marrow</tissue>
    </source>
</reference>
<reference key="3">
    <citation type="submission" date="2006-10" db="EMBL/GenBank/DDBJ databases">
        <authorList>
            <person name="Livingston R.J."/>
            <person name="Shaffer T."/>
            <person name="McFarland I."/>
            <person name="Nguyen C.P."/>
            <person name="Stanaway I.B."/>
            <person name="Rajkumar N."/>
            <person name="Johnson E.J."/>
            <person name="da Ponte S.H."/>
            <person name="Willa H."/>
            <person name="Ahearn M.O."/>
            <person name="Bertucci C."/>
            <person name="Acklestad J."/>
            <person name="Carroll A."/>
            <person name="Swanson J."/>
            <person name="Gildersleeve H.I."/>
            <person name="Nickerson D.A."/>
        </authorList>
    </citation>
    <scope>NUCLEOTIDE SEQUENCE [GENOMIC DNA] (ISOFORM 1)</scope>
    <scope>VARIANT ASP-28</scope>
</reference>
<reference key="4">
    <citation type="journal article" date="2004" name="Nat. Genet.">
        <title>Complete sequencing and characterization of 21,243 full-length human cDNAs.</title>
        <authorList>
            <person name="Ota T."/>
            <person name="Suzuki Y."/>
            <person name="Nishikawa T."/>
            <person name="Otsuki T."/>
            <person name="Sugiyama T."/>
            <person name="Irie R."/>
            <person name="Wakamatsu A."/>
            <person name="Hayashi K."/>
            <person name="Sato H."/>
            <person name="Nagai K."/>
            <person name="Kimura K."/>
            <person name="Makita H."/>
            <person name="Sekine M."/>
            <person name="Obayashi M."/>
            <person name="Nishi T."/>
            <person name="Shibahara T."/>
            <person name="Tanaka T."/>
            <person name="Ishii S."/>
            <person name="Yamamoto J."/>
            <person name="Saito K."/>
            <person name="Kawai Y."/>
            <person name="Isono Y."/>
            <person name="Nakamura Y."/>
            <person name="Nagahari K."/>
            <person name="Murakami K."/>
            <person name="Yasuda T."/>
            <person name="Iwayanagi T."/>
            <person name="Wagatsuma M."/>
            <person name="Shiratori A."/>
            <person name="Sudo H."/>
            <person name="Hosoiri T."/>
            <person name="Kaku Y."/>
            <person name="Kodaira H."/>
            <person name="Kondo H."/>
            <person name="Sugawara M."/>
            <person name="Takahashi M."/>
            <person name="Kanda K."/>
            <person name="Yokoi T."/>
            <person name="Furuya T."/>
            <person name="Kikkawa E."/>
            <person name="Omura Y."/>
            <person name="Abe K."/>
            <person name="Kamihara K."/>
            <person name="Katsuta N."/>
            <person name="Sato K."/>
            <person name="Tanikawa M."/>
            <person name="Yamazaki M."/>
            <person name="Ninomiya K."/>
            <person name="Ishibashi T."/>
            <person name="Yamashita H."/>
            <person name="Murakawa K."/>
            <person name="Fujimori K."/>
            <person name="Tanai H."/>
            <person name="Kimata M."/>
            <person name="Watanabe M."/>
            <person name="Hiraoka S."/>
            <person name="Chiba Y."/>
            <person name="Ishida S."/>
            <person name="Ono Y."/>
            <person name="Takiguchi S."/>
            <person name="Watanabe S."/>
            <person name="Yosida M."/>
            <person name="Hotuta T."/>
            <person name="Kusano J."/>
            <person name="Kanehori K."/>
            <person name="Takahashi-Fujii A."/>
            <person name="Hara H."/>
            <person name="Tanase T.-O."/>
            <person name="Nomura Y."/>
            <person name="Togiya S."/>
            <person name="Komai F."/>
            <person name="Hara R."/>
            <person name="Takeuchi K."/>
            <person name="Arita M."/>
            <person name="Imose N."/>
            <person name="Musashino K."/>
            <person name="Yuuki H."/>
            <person name="Oshima A."/>
            <person name="Sasaki N."/>
            <person name="Aotsuka S."/>
            <person name="Yoshikawa Y."/>
            <person name="Matsunawa H."/>
            <person name="Ichihara T."/>
            <person name="Shiohata N."/>
            <person name="Sano S."/>
            <person name="Moriya S."/>
            <person name="Momiyama H."/>
            <person name="Satoh N."/>
            <person name="Takami S."/>
            <person name="Terashima Y."/>
            <person name="Suzuki O."/>
            <person name="Nakagawa S."/>
            <person name="Senoh A."/>
            <person name="Mizoguchi H."/>
            <person name="Goto Y."/>
            <person name="Shimizu F."/>
            <person name="Wakebe H."/>
            <person name="Hishigaki H."/>
            <person name="Watanabe T."/>
            <person name="Sugiyama A."/>
            <person name="Takemoto M."/>
            <person name="Kawakami B."/>
            <person name="Yamazaki M."/>
            <person name="Watanabe K."/>
            <person name="Kumagai A."/>
            <person name="Itakura S."/>
            <person name="Fukuzumi Y."/>
            <person name="Fujimori Y."/>
            <person name="Komiyama M."/>
            <person name="Tashiro H."/>
            <person name="Tanigami A."/>
            <person name="Fujiwara T."/>
            <person name="Ono T."/>
            <person name="Yamada K."/>
            <person name="Fujii Y."/>
            <person name="Ozaki K."/>
            <person name="Hirao M."/>
            <person name="Ohmori Y."/>
            <person name="Kawabata A."/>
            <person name="Hikiji T."/>
            <person name="Kobatake N."/>
            <person name="Inagaki H."/>
            <person name="Ikema Y."/>
            <person name="Okamoto S."/>
            <person name="Okitani R."/>
            <person name="Kawakami T."/>
            <person name="Noguchi S."/>
            <person name="Itoh T."/>
            <person name="Shigeta K."/>
            <person name="Senba T."/>
            <person name="Matsumura K."/>
            <person name="Nakajima Y."/>
            <person name="Mizuno T."/>
            <person name="Morinaga M."/>
            <person name="Sasaki M."/>
            <person name="Togashi T."/>
            <person name="Oyama M."/>
            <person name="Hata H."/>
            <person name="Watanabe M."/>
            <person name="Komatsu T."/>
            <person name="Mizushima-Sugano J."/>
            <person name="Satoh T."/>
            <person name="Shirai Y."/>
            <person name="Takahashi Y."/>
            <person name="Nakagawa K."/>
            <person name="Okumura K."/>
            <person name="Nagase T."/>
            <person name="Nomura N."/>
            <person name="Kikuchi H."/>
            <person name="Masuho Y."/>
            <person name="Yamashita R."/>
            <person name="Nakai K."/>
            <person name="Yada T."/>
            <person name="Nakamura Y."/>
            <person name="Ohara O."/>
            <person name="Isogai T."/>
            <person name="Sugano S."/>
        </authorList>
    </citation>
    <scope>NUCLEOTIDE SEQUENCE [LARGE SCALE MRNA] (ISOFORM 7)</scope>
    <source>
        <tissue>Trachea</tissue>
    </source>
</reference>
<reference key="5">
    <citation type="journal article" date="2006" name="Nature">
        <title>The DNA sequence and biological annotation of human chromosome 1.</title>
        <authorList>
            <person name="Gregory S.G."/>
            <person name="Barlow K.F."/>
            <person name="McLay K.E."/>
            <person name="Kaul R."/>
            <person name="Swarbreck D."/>
            <person name="Dunham A."/>
            <person name="Scott C.E."/>
            <person name="Howe K.L."/>
            <person name="Woodfine K."/>
            <person name="Spencer C.C.A."/>
            <person name="Jones M.C."/>
            <person name="Gillson C."/>
            <person name="Searle S."/>
            <person name="Zhou Y."/>
            <person name="Kokocinski F."/>
            <person name="McDonald L."/>
            <person name="Evans R."/>
            <person name="Phillips K."/>
            <person name="Atkinson A."/>
            <person name="Cooper R."/>
            <person name="Jones C."/>
            <person name="Hall R.E."/>
            <person name="Andrews T.D."/>
            <person name="Lloyd C."/>
            <person name="Ainscough R."/>
            <person name="Almeida J.P."/>
            <person name="Ambrose K.D."/>
            <person name="Anderson F."/>
            <person name="Andrew R.W."/>
            <person name="Ashwell R.I.S."/>
            <person name="Aubin K."/>
            <person name="Babbage A.K."/>
            <person name="Bagguley C.L."/>
            <person name="Bailey J."/>
            <person name="Beasley H."/>
            <person name="Bethel G."/>
            <person name="Bird C.P."/>
            <person name="Bray-Allen S."/>
            <person name="Brown J.Y."/>
            <person name="Brown A.J."/>
            <person name="Buckley D."/>
            <person name="Burton J."/>
            <person name="Bye J."/>
            <person name="Carder C."/>
            <person name="Chapman J.C."/>
            <person name="Clark S.Y."/>
            <person name="Clarke G."/>
            <person name="Clee C."/>
            <person name="Cobley V."/>
            <person name="Collier R.E."/>
            <person name="Corby N."/>
            <person name="Coville G.J."/>
            <person name="Davies J."/>
            <person name="Deadman R."/>
            <person name="Dunn M."/>
            <person name="Earthrowl M."/>
            <person name="Ellington A.G."/>
            <person name="Errington H."/>
            <person name="Frankish A."/>
            <person name="Frankland J."/>
            <person name="French L."/>
            <person name="Garner P."/>
            <person name="Garnett J."/>
            <person name="Gay L."/>
            <person name="Ghori M.R.J."/>
            <person name="Gibson R."/>
            <person name="Gilby L.M."/>
            <person name="Gillett W."/>
            <person name="Glithero R.J."/>
            <person name="Grafham D.V."/>
            <person name="Griffiths C."/>
            <person name="Griffiths-Jones S."/>
            <person name="Grocock R."/>
            <person name="Hammond S."/>
            <person name="Harrison E.S.I."/>
            <person name="Hart E."/>
            <person name="Haugen E."/>
            <person name="Heath P.D."/>
            <person name="Holmes S."/>
            <person name="Holt K."/>
            <person name="Howden P.J."/>
            <person name="Hunt A.R."/>
            <person name="Hunt S.E."/>
            <person name="Hunter G."/>
            <person name="Isherwood J."/>
            <person name="James R."/>
            <person name="Johnson C."/>
            <person name="Johnson D."/>
            <person name="Joy A."/>
            <person name="Kay M."/>
            <person name="Kershaw J.K."/>
            <person name="Kibukawa M."/>
            <person name="Kimberley A.M."/>
            <person name="King A."/>
            <person name="Knights A.J."/>
            <person name="Lad H."/>
            <person name="Laird G."/>
            <person name="Lawlor S."/>
            <person name="Leongamornlert D.A."/>
            <person name="Lloyd D.M."/>
            <person name="Loveland J."/>
            <person name="Lovell J."/>
            <person name="Lush M.J."/>
            <person name="Lyne R."/>
            <person name="Martin S."/>
            <person name="Mashreghi-Mohammadi M."/>
            <person name="Matthews L."/>
            <person name="Matthews N.S.W."/>
            <person name="McLaren S."/>
            <person name="Milne S."/>
            <person name="Mistry S."/>
            <person name="Moore M.J.F."/>
            <person name="Nickerson T."/>
            <person name="O'Dell C.N."/>
            <person name="Oliver K."/>
            <person name="Palmeiri A."/>
            <person name="Palmer S.A."/>
            <person name="Parker A."/>
            <person name="Patel D."/>
            <person name="Pearce A.V."/>
            <person name="Peck A.I."/>
            <person name="Pelan S."/>
            <person name="Phelps K."/>
            <person name="Phillimore B.J."/>
            <person name="Plumb R."/>
            <person name="Rajan J."/>
            <person name="Raymond C."/>
            <person name="Rouse G."/>
            <person name="Saenphimmachak C."/>
            <person name="Sehra H.K."/>
            <person name="Sheridan E."/>
            <person name="Shownkeen R."/>
            <person name="Sims S."/>
            <person name="Skuce C.D."/>
            <person name="Smith M."/>
            <person name="Steward C."/>
            <person name="Subramanian S."/>
            <person name="Sycamore N."/>
            <person name="Tracey A."/>
            <person name="Tromans A."/>
            <person name="Van Helmond Z."/>
            <person name="Wall M."/>
            <person name="Wallis J.M."/>
            <person name="White S."/>
            <person name="Whitehead S.L."/>
            <person name="Wilkinson J.E."/>
            <person name="Willey D.L."/>
            <person name="Williams H."/>
            <person name="Wilming L."/>
            <person name="Wray P.W."/>
            <person name="Wu Z."/>
            <person name="Coulson A."/>
            <person name="Vaudin M."/>
            <person name="Sulston J.E."/>
            <person name="Durbin R.M."/>
            <person name="Hubbard T."/>
            <person name="Wooster R."/>
            <person name="Dunham I."/>
            <person name="Carter N.P."/>
            <person name="McVean G."/>
            <person name="Ross M.T."/>
            <person name="Harrow J."/>
            <person name="Olson M.V."/>
            <person name="Beck S."/>
            <person name="Rogers J."/>
            <person name="Bentley D.R."/>
        </authorList>
    </citation>
    <scope>NUCLEOTIDE SEQUENCE [LARGE SCALE GENOMIC DNA]</scope>
</reference>
<reference key="6">
    <citation type="submission" date="2005-09" db="EMBL/GenBank/DDBJ databases">
        <authorList>
            <person name="Mural R.J."/>
            <person name="Istrail S."/>
            <person name="Sutton G.G."/>
            <person name="Florea L."/>
            <person name="Halpern A.L."/>
            <person name="Mobarry C.M."/>
            <person name="Lippert R."/>
            <person name="Walenz B."/>
            <person name="Shatkay H."/>
            <person name="Dew I."/>
            <person name="Miller J.R."/>
            <person name="Flanigan M.J."/>
            <person name="Edwards N.J."/>
            <person name="Bolanos R."/>
            <person name="Fasulo D."/>
            <person name="Halldorsson B.V."/>
            <person name="Hannenhalli S."/>
            <person name="Turner R."/>
            <person name="Yooseph S."/>
            <person name="Lu F."/>
            <person name="Nusskern D.R."/>
            <person name="Shue B.C."/>
            <person name="Zheng X.H."/>
            <person name="Zhong F."/>
            <person name="Delcher A.L."/>
            <person name="Huson D.H."/>
            <person name="Kravitz S.A."/>
            <person name="Mouchard L."/>
            <person name="Reinert K."/>
            <person name="Remington K.A."/>
            <person name="Clark A.G."/>
            <person name="Waterman M.S."/>
            <person name="Eichler E.E."/>
            <person name="Adams M.D."/>
            <person name="Hunkapiller M.W."/>
            <person name="Myers E.W."/>
            <person name="Venter J.C."/>
        </authorList>
    </citation>
    <scope>NUCLEOTIDE SEQUENCE [LARGE SCALE GENOMIC DNA]</scope>
    <scope>VARIANT ASP-28</scope>
</reference>
<reference key="7">
    <citation type="journal article" date="2004" name="Genome Res.">
        <title>The status, quality, and expansion of the NIH full-length cDNA project: the Mammalian Gene Collection (MGC).</title>
        <authorList>
            <consortium name="The MGC Project Team"/>
        </authorList>
    </citation>
    <scope>NUCLEOTIDE SEQUENCE [LARGE SCALE MRNA] (ISOFORM 6)</scope>
    <source>
        <tissue>Lymph</tissue>
    </source>
</reference>
<reference key="8">
    <citation type="journal article" date="2002" name="Blood">
        <title>IRTAs: a new family of immunoglobulin-like receptors differentially expressed in B cells.</title>
        <authorList>
            <person name="Miller I."/>
            <person name="Hatzivassiliou G."/>
            <person name="Cattoretti G."/>
            <person name="Mendelsohn C."/>
            <person name="Dalla-Favera R."/>
        </authorList>
    </citation>
    <scope>CHARACTERIZATION</scope>
    <scope>TISSUE SPECIFICITY</scope>
</reference>
<reference key="9">
    <citation type="journal article" date="2006" name="Int. Immunol.">
        <title>Expression pattern of the human FcRH/IRTA receptors in normal tissue and in B-chronic lymphocytic leukemia.</title>
        <authorList>
            <person name="Polson A.G."/>
            <person name="Zheng B."/>
            <person name="Elkins K."/>
            <person name="Chang W."/>
            <person name="Du C."/>
            <person name="Dowd P."/>
            <person name="Yen L."/>
            <person name="Tan C."/>
            <person name="Hongo J.-A."/>
            <person name="Koeppen H."/>
            <person name="Ebens A."/>
        </authorList>
    </citation>
    <scope>SUBCELLULAR LOCATION</scope>
    <scope>TISSUE SPECIFICITY</scope>
</reference>
<reference key="10">
    <citation type="journal article" date="2009" name="J. Immunol.">
        <title>FCRL3, an autoimmune susceptibility gene, has inhibitory potential on B-cell receptor-mediated signaling.</title>
        <authorList>
            <person name="Kochi Y."/>
            <person name="Myouzen K."/>
            <person name="Yamada R."/>
            <person name="Suzuki A."/>
            <person name="Kurosaki T."/>
            <person name="Nakamura Y."/>
            <person name="Yamamoto K."/>
        </authorList>
    </citation>
    <scope>FUNCTION</scope>
    <scope>INTERACTION WITH INPP5D; PTPN6; PTPN11; SYK AND ZAP70</scope>
    <scope>PHOSPHORYLATION AT TYR-650; TYR-662; TYR-692 AND TYR-722</scope>
    <scope>MUTAGENESIS OF TYR-650; TYR-662; TYR-692 AND TYR-722</scope>
</reference>
<reference key="11">
    <citation type="journal article" date="2009" name="J. Immunol.">
        <title>Fc receptor-like 3 protein expressed on IL-2 nonresponsive subset of human regulatory T cells.</title>
        <authorList>
            <person name="Nagata S."/>
            <person name="Ise T."/>
            <person name="Pastan I."/>
        </authorList>
    </citation>
    <scope>FUNCTION</scope>
    <scope>TISSUE SPECIFICITY</scope>
</reference>
<reference key="12">
    <citation type="journal article" date="2010" name="J. Immunol.">
        <title>Expression of the autoimmune susceptibility gene FcRL3 on human regulatory T cells is associated with dysfunction and high levels of programmed cell death-1.</title>
        <authorList>
            <person name="Swainson L.A."/>
            <person name="Mold J.E."/>
            <person name="Bajpai U.D."/>
            <person name="McCune J.M."/>
        </authorList>
    </citation>
    <scope>FUNCTION</scope>
    <scope>TISSUE SPECIFICITY</scope>
</reference>
<reference key="13">
    <citation type="journal article" date="2013" name="Eur. J. Immunol.">
        <title>FCRL3 promotes TLR9-induced B-cell activation and suppresses plasma cell differentiation.</title>
        <authorList>
            <person name="Li F.J."/>
            <person name="Schreeder D.M."/>
            <person name="Li R."/>
            <person name="Wu J."/>
            <person name="Davis R.S."/>
        </authorList>
    </citation>
    <scope>FUNCTION</scope>
    <scope>TISSUE SPECIFICITY</scope>
    <scope>SUBCELLULAR LOCATION</scope>
    <scope>DEVELOPMENTAL STAGE</scope>
</reference>
<reference key="14">
    <citation type="journal article" date="2022" name="Sci. Adv.">
        <title>MAIA, Fc receptor-like 3, supersedes JUNO as IZUMO1 receptor during human fertilization.</title>
        <authorList>
            <person name="Vondrakova J."/>
            <person name="Frolikova M."/>
            <person name="Ded L."/>
            <person name="Cerny J."/>
            <person name="Postlerova P."/>
            <person name="Palenikova V."/>
            <person name="Simonik O."/>
            <person name="Nahacka Z."/>
            <person name="Basus K."/>
            <person name="Valaskova E."/>
            <person name="Machan R."/>
            <person name="Pacey A."/>
            <person name="Holubcova Z."/>
            <person name="Koubek P."/>
            <person name="Ezrova Z."/>
            <person name="Park S."/>
            <person name="Liu R."/>
            <person name="Partha R."/>
            <person name="Clark N."/>
            <person name="Neuzil J."/>
            <person name="Ikawa M."/>
            <person name="Erickson K."/>
            <person name="Lam K.S."/>
            <person name="Moore H."/>
            <person name="Komrskova K."/>
        </authorList>
    </citation>
    <scope>FUNCTION</scope>
    <scope>INTERACTION WITH IZUMO1R/JUNO AND IZUMO1</scope>
    <scope>SUBCELLULAR LOCATION</scope>
    <scope>DEVELOPMENTAL STAGE</scope>
    <scope>TISSUE SPECIFICITY</scope>
</reference>
<reference key="15">
    <citation type="journal article" date="2005" name="Nat. Genet.">
        <title>A functional variant in FCRL3, encoding Fc receptor-like 3, is associated with rheumatoid arthritis and several autoimmunities.</title>
        <authorList>
            <person name="Kochi Y."/>
            <person name="Yamada R."/>
            <person name="Suzuki A."/>
            <person name="Harley J.B."/>
            <person name="Shirasawa S."/>
            <person name="Sawada T."/>
            <person name="Bae S.-C."/>
            <person name="Tokuhiro S."/>
            <person name="Chang X."/>
            <person name="Sekine A."/>
            <person name="Takahashi A."/>
            <person name="Tsunoda T."/>
            <person name="Ohnishi Y."/>
            <person name="Kaufman K.M."/>
            <person name="Kang C.P."/>
            <person name="Kang C."/>
            <person name="Otsubo S."/>
            <person name="Yumura W."/>
            <person name="Mimori A."/>
            <person name="Koike T."/>
            <person name="Nakamura Y."/>
            <person name="Sasazuki T."/>
            <person name="Yamamoto K."/>
        </authorList>
    </citation>
    <scope>INVOLVEMENT IN RHEUMATOID ARTHRITIS AND GRAVES DISEASE</scope>
    <scope>TISSUE SPECIFICITY</scope>
</reference>
<reference key="16">
    <citation type="journal article" date="2006" name="Ann. Rheum. Dis.">
        <title>Supportive evidence for a genetic association of the FCRL3 promoter polymorphism with rheumatoid arthritis.</title>
        <authorList>
            <person name="Ikari K."/>
            <person name="Momohara S."/>
            <person name="Nakamura T."/>
            <person name="Hara M."/>
            <person name="Yamanaka H."/>
            <person name="Tomatsu T."/>
            <person name="Kamatani N."/>
        </authorList>
    </citation>
    <scope>INVOLVEMENT IN RHEUMATOID ARTHRITIS</scope>
</reference>
<reference key="17">
    <citation type="journal article" date="2006" name="Ann. Rheum. Dis.">
        <title>Epistatic interaction between FCRL3 and NFkappaB1 genes in Spanish patients with rheumatoid arthritis.</title>
        <authorList>
            <person name="Martinez A."/>
            <person name="Sanchez E."/>
            <person name="Valdivia A."/>
            <person name="Orozco G."/>
            <person name="Lopez-Nevot M.A."/>
            <person name="Pascual-Salcedo D."/>
            <person name="Balsa A."/>
            <person name="Fernandez-Gutierrez B."/>
            <person name="de la Concha E.G."/>
            <person name="Garcia-Sanchez A."/>
            <person name="Koeleman B.P.C."/>
            <person name="Urcelay E."/>
            <person name="Martin J."/>
        </authorList>
    </citation>
    <scope>INVOLVEMENT IN RHEUMATOID ARTHRITIS</scope>
</reference>
<reference key="18">
    <citation type="journal article" date="2006" name="Arthritis Res. Ther.">
        <title>Association of the FCRL3 gene with rheumatoid arthritis: a further example of population specificity?</title>
        <authorList>
            <person name="Eyre S."/>
            <person name="Bowes J."/>
            <person name="Potter C."/>
            <person name="Worthington J."/>
            <person name="Barton A."/>
        </authorList>
    </citation>
    <scope>INVOLVEMENT IN RHEUMATOID ARTHRITIS</scope>
</reference>
<reference key="19">
    <citation type="journal article" date="2006" name="Arthritis Rheum.">
        <title>Rheumatoid arthritis association with the FCRL3 -169C polymorphism is restricted to PTPN22 1858T-homozygous individuals in a Canadian population.</title>
        <authorList>
            <person name="Newman W.G."/>
            <person name="Zhang Q."/>
            <person name="Liu X."/>
            <person name="Walker E."/>
            <person name="Ternan H."/>
            <person name="Owen J."/>
            <person name="Johnson B."/>
            <person name="Greer W."/>
            <person name="Mosher D.P."/>
            <person name="Maksymowych W.P."/>
            <person name="Bykerk V.P."/>
            <person name="Keystone E.C."/>
            <person name="Amos C.I."/>
            <person name="Siminovitch K.A."/>
        </authorList>
    </citation>
    <scope>INVOLVEMENT IN RHEUMATOID ARTHRITIS</scope>
</reference>
<reference key="20">
    <citation type="journal article" date="2006" name="J. Clin. Endocrinol. Metab.">
        <title>Contribution of single nucleotide polymorphisms within FCRL3 and MAP3K7IP2 to the pathogenesis of Graves' disease.</title>
        <authorList>
            <person name="Simmonds M.J."/>
            <person name="Heward J.M."/>
            <person name="Carr-Smith J."/>
            <person name="Foxall H."/>
            <person name="Franklyn J.A."/>
            <person name="Gough S.C.L."/>
        </authorList>
    </citation>
    <scope>INVOLVEMENT IN GRAVES DISEASE</scope>
</reference>
<reference key="21">
    <citation type="journal article" date="2007" name="Ann. Rheum. Dis.">
        <title>FCRL3 promoter 169 CC homozygosity is associated with susceptibility to rheumatoid arthritis in Dutch Caucasians.</title>
        <authorList>
            <person name="Thabet M.M."/>
            <person name="Wesoly J."/>
            <person name="Slagboom P.E."/>
            <person name="Toes R.E.M."/>
            <person name="Huizinga T.W.J."/>
        </authorList>
    </citation>
    <scope>INVOLVEMENT IN RHEUMATOID ARTHRITIS</scope>
</reference>
<reference key="22">
    <citation type="journal article" date="2007" name="Arthritis Rheum.">
        <title>Meta-analysis evidence of a differential risk of the FCRL3 -169T--&gt;C polymorphism in white and East Asian rheumatoid arthritis patients.</title>
        <authorList>
            <person name="Begovich A.B."/>
            <person name="Chang M."/>
            <person name="Schrodi S.J."/>
        </authorList>
    </citation>
    <scope>INVOLVEMENT IN RHEUMATOID ARTHRITIS</scope>
</reference>
<reference key="23">
    <citation type="journal article" date="2007" name="Nat. Genet.">
        <title>Association scan of 14,500 nonsynonymous SNPs in four diseases identifies autoimmunity variants.</title>
        <authorList>
            <consortium name="The Wellcome Trust case control consortium"/>
            <consortium name="The Australo-Anglo-American spondylitis consortium"/>
        </authorList>
    </citation>
    <scope>INVOLVEMENT IN GRAVES DISEASE</scope>
</reference>
<reference key="24">
    <citation type="journal article" date="2012" name="Arthritis Rheum.">
        <title>A functional variant in FCRL3 is associated with higher Fc receptor-like 3 expression on T cell subsets and rheumatoid arthritis disease activity.</title>
        <authorList>
            <person name="Bajpai U.D."/>
            <person name="Swainson L.A."/>
            <person name="Mold J.E."/>
            <person name="Graf J.D."/>
            <person name="Imboden J.B."/>
            <person name="McCune J.M."/>
        </authorList>
    </citation>
    <scope>INVOLVEMENT IN RHEUMATOID ARTHRITIS</scope>
</reference>
<reference key="25">
    <citation type="journal article" date="2015" name="Int. J. Clin. Exp. Med.">
        <title>Genetic associations of FCRL3 polymorphisms with the susceptibility of Graves ophthalmopathy in a Chinese population.</title>
        <authorList>
            <person name="Wu S."/>
            <person name="Cai T."/>
            <person name="Chen F."/>
            <person name="He X."/>
            <person name="Cui Z."/>
        </authorList>
    </citation>
    <scope>INVOLVEMENT IN GRAVES DISEASE</scope>
</reference>
<reference key="26">
    <citation type="journal article" date="2016" name="Hum. Immunol.">
        <title>FCRL3 gene polymorphisms as risk factors for rheumatoid arthritis.</title>
        <authorList>
            <person name="Lin X."/>
            <person name="Zhang Y."/>
            <person name="Chen Q."/>
        </authorList>
    </citation>
    <scope>INVOLVEMENT IN RHEUMATOID ARTHRITIS</scope>
</reference>
<reference key="27">
    <citation type="journal article" date="2016" name="Mol. Neurobiol.">
        <title>Four FCRL3 Gene Polymorphisms (FCRL3_3, _5, _6, _8) Confer Susceptibility to Multiple Sclerosis: Results from a Case-Control Study.</title>
        <authorList>
            <person name="Yuan M."/>
            <person name="Wei L."/>
            <person name="Zhou R."/>
            <person name="Bai Q."/>
            <person name="Wei Y."/>
            <person name="Zhang W."/>
            <person name="Huang Y."/>
        </authorList>
    </citation>
    <scope>INVOLVEMENT IN MULTIPLE SCLEROSIS</scope>
</reference>
<reference key="28">
    <citation type="journal article" date="2006" name="Science">
        <title>The consensus coding sequences of human breast and colorectal cancers.</title>
        <authorList>
            <person name="Sjoeblom T."/>
            <person name="Jones S."/>
            <person name="Wood L.D."/>
            <person name="Parsons D.W."/>
            <person name="Lin J."/>
            <person name="Barber T.D."/>
            <person name="Mandelker D."/>
            <person name="Leary R.J."/>
            <person name="Ptak J."/>
            <person name="Silliman N."/>
            <person name="Szabo S."/>
            <person name="Buckhaults P."/>
            <person name="Farrell C."/>
            <person name="Meeh P."/>
            <person name="Markowitz S.D."/>
            <person name="Willis J."/>
            <person name="Dawson D."/>
            <person name="Willson J.K.V."/>
            <person name="Gazdar A.F."/>
            <person name="Hartigan J."/>
            <person name="Wu L."/>
            <person name="Liu C."/>
            <person name="Parmigiani G."/>
            <person name="Park B.H."/>
            <person name="Bachman K.E."/>
            <person name="Papadopoulos N."/>
            <person name="Vogelstein B."/>
            <person name="Kinzler K.W."/>
            <person name="Velculescu V.E."/>
        </authorList>
    </citation>
    <scope>VARIANT [LARGE SCALE ANALYSIS] ASN-445</scope>
</reference>
<sequence length="734" mass="80856">MLLWLLLLILTPGREQSGVAPKAVLLLNPPWSTAFKGEKVALICSSISHSLAQGDTYWYHDEKLLKIKHDKIQITEPGNYQCKTRGSSLSDAVHVEFSPDWLILQALHPVFEGDNVILRCQGKDNKNTHQKVYYKDGKQLPNSYNLEKITVNSVSRDNSKYHCTAYRKFYILDIEVTSKPLNIQVQELFLHPVLRASSSTPIEGSPMTLTCETQLSPQRPDVQLQFSLFRDSQTLGLGWSRSPRLQIPAMWTEDSGSYWCEVETVTHSIKKRSLRSQIRVQRVPVSNVNLEIRPTGGQLIEGENMVLICSVAQGSGTVTFSWHKEGRVRSLGRKTQRSLLAELHVLTVKESDAGRYYCAADNVHSPILSTWIRVTVRIPVSHPVLTFRAPRAHTVVGDLLELHCESLRGSPPILYRFYHEDVTLGNSSAPSGGGASFNLSLTAEHSGNYSCDADNGLGAQHSHGVSLRVTVPVSRPVLTLRAPGAQAVVGDLLELHCESLRGSFPILYWFYHEDDTLGNISAHSGGGASFNLSLTTEHSGNYSCEADNGLGAQHSKVVTLNVTGTSRNRTGLTAAGITGLVLSILVLAAAAALLHYARARRKPGGLSATGTSSHSPSECQEPSSSRPSRIDPQEPTHSKPLAPMELEPMYSNVNPGDSNPIYSQIWSIQHTKENSANCPMMHQEHEELTVLYSELKKTHPDDSAGEASSRGRAHEEDDEENYENVPRVLLASDH</sequence>
<name>FCRL3_HUMAN</name>
<feature type="signal peptide" evidence="1">
    <location>
        <begin position="1"/>
        <end position="17"/>
    </location>
</feature>
<feature type="chain" id="PRO_0000331640" description="Fc receptor-like protein 3">
    <location>
        <begin position="18"/>
        <end position="734"/>
    </location>
</feature>
<feature type="topological domain" description="Extracellular" evidence="1">
    <location>
        <begin position="18"/>
        <end position="573"/>
    </location>
</feature>
<feature type="transmembrane region" description="Helical" evidence="1">
    <location>
        <begin position="574"/>
        <end position="594"/>
    </location>
</feature>
<feature type="topological domain" description="Cytoplasmic" evidence="1">
    <location>
        <begin position="595"/>
        <end position="734"/>
    </location>
</feature>
<feature type="domain" description="Ig-like C2-type 1">
    <location>
        <begin position="21"/>
        <end position="98"/>
    </location>
</feature>
<feature type="domain" description="Ig-like C2-type 2">
    <location>
        <begin position="99"/>
        <end position="182"/>
    </location>
</feature>
<feature type="domain" description="Ig-like C2-type 3">
    <location>
        <begin position="192"/>
        <end position="270"/>
    </location>
</feature>
<feature type="domain" description="Ig-like C2-type 4">
    <location>
        <begin position="284"/>
        <end position="369"/>
    </location>
</feature>
<feature type="domain" description="Ig-like C2-type 5">
    <location>
        <begin position="383"/>
        <end position="470"/>
    </location>
</feature>
<feature type="domain" description="Ig-like C2-type 6">
    <location>
        <begin position="476"/>
        <end position="563"/>
    </location>
</feature>
<feature type="region of interest" description="Disordered" evidence="3">
    <location>
        <begin position="603"/>
        <end position="655"/>
    </location>
</feature>
<feature type="region of interest" description="Disordered" evidence="3">
    <location>
        <begin position="695"/>
        <end position="734"/>
    </location>
</feature>
<feature type="short sequence motif" description="ITIM motif 1">
    <location>
        <begin position="648"/>
        <end position="653"/>
    </location>
</feature>
<feature type="short sequence motif" description="ITIM motif 2">
    <location>
        <begin position="660"/>
        <end position="665"/>
    </location>
</feature>
<feature type="short sequence motif" description="ITIM motif 3">
    <location>
        <begin position="690"/>
        <end position="695"/>
    </location>
</feature>
<feature type="short sequence motif" description="ITIM motif 4">
    <location>
        <begin position="720"/>
        <end position="725"/>
    </location>
</feature>
<feature type="compositionally biased region" description="Polar residues" evidence="3">
    <location>
        <begin position="608"/>
        <end position="627"/>
    </location>
</feature>
<feature type="compositionally biased region" description="Basic and acidic residues" evidence="3">
    <location>
        <begin position="628"/>
        <end position="637"/>
    </location>
</feature>
<feature type="modified residue" description="Phosphotyrosine" evidence="34">
    <location>
        <position position="650"/>
    </location>
</feature>
<feature type="modified residue" description="Phosphotyrosine" evidence="34">
    <location>
        <position position="662"/>
    </location>
</feature>
<feature type="modified residue" description="Phosphotyrosine" evidence="34">
    <location>
        <position position="692"/>
    </location>
</feature>
<feature type="modified residue" description="Phosphotyrosine" evidence="34">
    <location>
        <position position="722"/>
    </location>
</feature>
<feature type="glycosylation site" description="N-linked (GlcNAc...) asparagine" evidence="1">
    <location>
        <position position="561"/>
    </location>
</feature>
<feature type="disulfide bond" evidence="2">
    <location>
        <begin position="44"/>
        <end position="82"/>
    </location>
</feature>
<feature type="disulfide bond" evidence="2">
    <location>
        <begin position="120"/>
        <end position="163"/>
    </location>
</feature>
<feature type="disulfide bond" evidence="2">
    <location>
        <begin position="211"/>
        <end position="260"/>
    </location>
</feature>
<feature type="disulfide bond" evidence="2">
    <location>
        <begin position="309"/>
        <end position="358"/>
    </location>
</feature>
<feature type="disulfide bond" evidence="2">
    <location>
        <begin position="404"/>
        <end position="451"/>
    </location>
</feature>
<feature type="disulfide bond" evidence="2">
    <location>
        <begin position="497"/>
        <end position="544"/>
    </location>
</feature>
<feature type="splice variant" id="VSP_033300" description="In isoform 2." evidence="29">
    <original>ELFLHPVLRASSSTPIEGSPMTLTCETQLSPQRPDVQLQFSLFRDSQTLGLGWSRSPRLQIPAMWTEDSGSYWCEVETVTHSIKKRSLRSQIRVQR</original>
    <variation>G</variation>
    <location>
        <begin position="187"/>
        <end position="282"/>
    </location>
</feature>
<feature type="splice variant" id="VSP_033301" description="In isoform 4." evidence="29">
    <original>ELF</original>
    <variation>GNG</variation>
    <location>
        <begin position="187"/>
        <end position="189"/>
    </location>
</feature>
<feature type="splice variant" id="VSP_033302" description="In isoform 5." evidence="29">
    <original>LFLHPVLRASSS</original>
    <variation>ARCPAAILPLQR</variation>
    <location>
        <begin position="188"/>
        <end position="199"/>
    </location>
</feature>
<feature type="splice variant" id="VSP_033303" description="In isoform 4." evidence="29">
    <location>
        <begin position="190"/>
        <end position="734"/>
    </location>
</feature>
<feature type="splice variant" id="VSP_033304" description="In isoform 5." evidence="29">
    <location>
        <begin position="200"/>
        <end position="734"/>
    </location>
</feature>
<feature type="splice variant" id="VSP_033305" description="In isoform 3." evidence="29">
    <original>I</original>
    <variation>TLLSPSV</variation>
    <location>
        <position position="378"/>
    </location>
</feature>
<feature type="splice variant" id="VSP_033306" description="In isoform 7." evidence="30">
    <original>THPDDSAGEA</original>
    <variation>EQSSRFSMSL</variation>
    <location>
        <begin position="698"/>
        <end position="707"/>
    </location>
</feature>
<feature type="splice variant" id="VSP_033307" description="In isoform 7." evidence="30">
    <location>
        <begin position="708"/>
        <end position="734"/>
    </location>
</feature>
<feature type="splice variant" id="VSP_033308" description="In isoform 6." evidence="31">
    <original>VPRVLLASDH</original>
    <variation>ILNPRKNKVQDFPCLCNT</variation>
    <location>
        <begin position="725"/>
        <end position="734"/>
    </location>
</feature>
<feature type="sequence variant" id="VAR_042924" description="In dbSNP:rs7522061." evidence="27 28">
    <original>N</original>
    <variation>D</variation>
    <location>
        <position position="28"/>
    </location>
</feature>
<feature type="sequence variant" id="VAR_042925" description="In dbSNP:rs12041673.">
    <original>L</original>
    <variation>F</variation>
    <location>
        <position position="307"/>
    </location>
</feature>
<feature type="sequence variant" id="VAR_042926" description="In a breast cancer sample; somatic mutation." evidence="13">
    <original>H</original>
    <variation>N</variation>
    <location>
        <position position="445"/>
    </location>
</feature>
<feature type="sequence variant" id="VAR_042927" description="In dbSNP:rs944627.">
    <original>P</original>
    <variation>L</variation>
    <location>
        <position position="660"/>
    </location>
</feature>
<feature type="sequence variant" id="VAR_042928" description="In dbSNP:rs2282284.">
    <original>N</original>
    <variation>S</variation>
    <location>
        <position position="721"/>
    </location>
</feature>
<feature type="mutagenesis site" description="No effect on inhibition of cell death. No effect on interaction with INPP5D, PTPN6 and PTPN11. Loss of phosphorylation, calcium influx inhibition and interaction with INPP5D, PTPN6 and PTPN11; when associated with F-662; F-692 and F-722. Alters binding with SYK and ZAP70; when associated with F-662. Decreases calcium influx inhibition; when associated with F-662 and F-722. Decreases calcium influx inhibition; when associated with F-692 and F-722." evidence="6 19">
    <original>Y</original>
    <variation>F</variation>
    <location>
        <position position="650"/>
    </location>
</feature>
<feature type="mutagenesis site" description="Reduces inhibition of cell death. Decreases interaction with INPP5D and PTPN6. No effect on interaction with PTPN11. Loss of phosphorylation, calcium influx inhibition and interaction with INPP5D, PTPN6 and PTPN11; when associated with F-650; F-692 and F-722. Alters binding with SYK and ZAP70; when associated with F-650. Decreases calcium influx inhibition; when associated with F-650 and F-722. Increases calcium influx inhibition; when associated with F-650 and F-722." evidence="6 19">
    <original>Y</original>
    <variation>F</variation>
    <location>
        <position position="662"/>
    </location>
</feature>
<feature type="mutagenesis site" description="Partially reduces inhibition of cell death. Decreases interaction with INPP5D and PTPN11. No effect on interaction with PTPN6. Loss of phosphorylation, calcium influx inhibition and interaction with INPP5D, PTPN6 and PTPN11; when associated with F-650; F-662 and F-722. Alters binding with PTPN6 and PTPN11; when associated with F-772. Decreases calcium influx inhibition; when associated with F-650 and F-722. Increases calcium influx inhibition; when associated with F-650 and F-662. Decreases calcium influx inhibition; when associated with F-722." evidence="6 19">
    <original>Y</original>
    <variation>F</variation>
    <location>
        <position position="692"/>
    </location>
</feature>
<feature type="mutagenesis site" description="No effect on inhibition of cell death. No effect on interaction with INPP5D, PTPN6 and PTPN11. Loss of phosphorylation, calcium influx inhibition and interaction with INPP5D, PTPN6 and PTPN11; when associated with F-650; F-662 and F-692. Alters binding with PTPN6 and PTPN11; when associated with F-692. Decreases calcium influx inhibition; when associated with F-650 and F-662. Decreases calcium influx inhibition; when associated with F-650 and F-692. Decreases calcium influx inhibition; when associated with F-692." evidence="6 19">
    <original>Y</original>
    <variation>F</variation>
    <location>
        <position position="722"/>
    </location>
</feature>
<feature type="sequence conflict" description="In Ref. 4; AK098122." evidence="33" ref="4">
    <original>R</original>
    <variation>K</variation>
    <location>
        <position position="244"/>
    </location>
</feature>
<feature type="sequence conflict" description="In Ref. 1; AAK91779." evidence="33" ref="1">
    <original>V</original>
    <variation>A</variation>
    <location>
        <position position="653"/>
    </location>
</feature>
<keyword id="KW-0025">Alternative splicing</keyword>
<keyword id="KW-1003">Cell membrane</keyword>
<keyword id="KW-0966">Cell projection</keyword>
<keyword id="KW-1015">Disulfide bond</keyword>
<keyword id="KW-0278">Fertilization</keyword>
<keyword id="KW-0325">Glycoprotein</keyword>
<keyword id="KW-0393">Immunoglobulin domain</keyword>
<keyword id="KW-0472">Membrane</keyword>
<keyword id="KW-0597">Phosphoprotein</keyword>
<keyword id="KW-1267">Proteomics identification</keyword>
<keyword id="KW-0675">Receptor</keyword>
<keyword id="KW-1185">Reference proteome</keyword>
<keyword id="KW-0677">Repeat</keyword>
<keyword id="KW-0732">Signal</keyword>
<keyword id="KW-0812">Transmembrane</keyword>
<keyword id="KW-1133">Transmembrane helix</keyword>
<evidence type="ECO:0000255" key="1"/>
<evidence type="ECO:0000255" key="2">
    <source>
        <dbReference type="PROSITE-ProRule" id="PRU00114"/>
    </source>
</evidence>
<evidence type="ECO:0000256" key="3">
    <source>
        <dbReference type="SAM" id="MobiDB-lite"/>
    </source>
</evidence>
<evidence type="ECO:0000269" key="4">
    <source>
    </source>
</evidence>
<evidence type="ECO:0000269" key="5">
    <source>
    </source>
</evidence>
<evidence type="ECO:0000269" key="6">
    <source>
    </source>
</evidence>
<evidence type="ECO:0000269" key="7">
    <source>
    </source>
</evidence>
<evidence type="ECO:0000269" key="8">
    <source>
    </source>
</evidence>
<evidence type="ECO:0000269" key="9">
    <source>
    </source>
</evidence>
<evidence type="ECO:0000269" key="10">
    <source>
    </source>
</evidence>
<evidence type="ECO:0000269" key="11">
    <source>
    </source>
</evidence>
<evidence type="ECO:0000269" key="12">
    <source>
    </source>
</evidence>
<evidence type="ECO:0000269" key="13">
    <source>
    </source>
</evidence>
<evidence type="ECO:0000269" key="14">
    <source>
    </source>
</evidence>
<evidence type="ECO:0000269" key="15">
    <source>
    </source>
</evidence>
<evidence type="ECO:0000269" key="16">
    <source>
    </source>
</evidence>
<evidence type="ECO:0000269" key="17">
    <source>
    </source>
</evidence>
<evidence type="ECO:0000269" key="18">
    <source>
    </source>
</evidence>
<evidence type="ECO:0000269" key="19">
    <source>
    </source>
</evidence>
<evidence type="ECO:0000269" key="20">
    <source>
    </source>
</evidence>
<evidence type="ECO:0000269" key="21">
    <source>
    </source>
</evidence>
<evidence type="ECO:0000269" key="22">
    <source>
    </source>
</evidence>
<evidence type="ECO:0000269" key="23">
    <source>
    </source>
</evidence>
<evidence type="ECO:0000269" key="24">
    <source>
    </source>
</evidence>
<evidence type="ECO:0000269" key="25">
    <source>
    </source>
</evidence>
<evidence type="ECO:0000269" key="26">
    <source>
    </source>
</evidence>
<evidence type="ECO:0000269" key="27">
    <source ref="3"/>
</evidence>
<evidence type="ECO:0000269" key="28">
    <source ref="6"/>
</evidence>
<evidence type="ECO:0000303" key="29">
    <source>
    </source>
</evidence>
<evidence type="ECO:0000303" key="30">
    <source>
    </source>
</evidence>
<evidence type="ECO:0000303" key="31">
    <source>
    </source>
</evidence>
<evidence type="ECO:0000303" key="32">
    <source>
    </source>
</evidence>
<evidence type="ECO:0000305" key="33"/>
<evidence type="ECO:0000305" key="34">
    <source>
    </source>
</evidence>
<evidence type="ECO:0000312" key="35">
    <source>
        <dbReference type="HGNC" id="HGNC:18506"/>
    </source>
</evidence>